<gene>
    <name evidence="1" type="primary">menG</name>
    <name type="synonym">menH</name>
    <name type="ordered locus">LL1669.1</name>
</gene>
<keyword id="KW-0474">Menaquinone biosynthesis</keyword>
<keyword id="KW-0489">Methyltransferase</keyword>
<keyword id="KW-1185">Reference proteome</keyword>
<keyword id="KW-0949">S-adenosyl-L-methionine</keyword>
<keyword id="KW-0808">Transferase</keyword>
<accession>P49016</accession>
<feature type="chain" id="PRO_0000193284" description="Demethylmenaquinone methyltransferase">
    <location>
        <begin position="1"/>
        <end position="252"/>
    </location>
</feature>
<feature type="binding site" evidence="1">
    <location>
        <position position="64"/>
    </location>
    <ligand>
        <name>S-adenosyl-L-methionine</name>
        <dbReference type="ChEBI" id="CHEBI:59789"/>
    </ligand>
</feature>
<feature type="binding site" evidence="1">
    <location>
        <position position="85"/>
    </location>
    <ligand>
        <name>S-adenosyl-L-methionine</name>
        <dbReference type="ChEBI" id="CHEBI:59789"/>
    </ligand>
</feature>
<feature type="binding site" evidence="1">
    <location>
        <begin position="112"/>
        <end position="113"/>
    </location>
    <ligand>
        <name>S-adenosyl-L-methionine</name>
        <dbReference type="ChEBI" id="CHEBI:59789"/>
    </ligand>
</feature>
<feature type="sequence conflict" description="In Ref. 2." evidence="2" ref="2">
    <original>K</original>
    <variation>M</variation>
    <location>
        <position position="5"/>
    </location>
</feature>
<feature type="sequence conflict" description="In Ref. 2." evidence="2" ref="2">
    <original>KGS</original>
    <variation>NEN</variation>
    <location>
        <begin position="120"/>
        <end position="122"/>
    </location>
</feature>
<feature type="sequence conflict" description="In Ref. 2." evidence="2" ref="2">
    <original>L</original>
    <variation>F</variation>
    <location>
        <position position="183"/>
    </location>
</feature>
<feature type="sequence conflict" description="In Ref. 2." evidence="2" ref="2">
    <original>Q</original>
    <variation>K</variation>
    <location>
        <position position="241"/>
    </location>
</feature>
<organism>
    <name type="scientific">Lactococcus lactis subsp. lactis (strain IL1403)</name>
    <name type="common">Streptococcus lactis</name>
    <dbReference type="NCBI Taxonomy" id="272623"/>
    <lineage>
        <taxon>Bacteria</taxon>
        <taxon>Bacillati</taxon>
        <taxon>Bacillota</taxon>
        <taxon>Bacilli</taxon>
        <taxon>Lactobacillales</taxon>
        <taxon>Streptococcaceae</taxon>
        <taxon>Lactococcus</taxon>
    </lineage>
</organism>
<dbReference type="EC" id="2.1.1.163" evidence="1"/>
<dbReference type="EMBL" id="L14679">
    <property type="protein sequence ID" value="AAA03166.1"/>
    <property type="molecule type" value="Unassigned_DNA"/>
</dbReference>
<dbReference type="EMBL" id="AE005176">
    <property type="status" value="NOT_ANNOTATED_CDS"/>
    <property type="molecule type" value="Genomic_DNA"/>
</dbReference>
<dbReference type="PIR" id="B48653">
    <property type="entry name" value="B48653"/>
</dbReference>
<dbReference type="SMR" id="P49016"/>
<dbReference type="UniPathway" id="UPA00079">
    <property type="reaction ID" value="UER00169"/>
</dbReference>
<dbReference type="Proteomes" id="UP000002196">
    <property type="component" value="Chromosome"/>
</dbReference>
<dbReference type="GO" id="GO:0043770">
    <property type="term" value="F:demethylmenaquinone methyltransferase activity"/>
    <property type="evidence" value="ECO:0007669"/>
    <property type="project" value="UniProtKB-UniRule"/>
</dbReference>
<dbReference type="GO" id="GO:0009234">
    <property type="term" value="P:menaquinone biosynthetic process"/>
    <property type="evidence" value="ECO:0007669"/>
    <property type="project" value="UniProtKB-UniRule"/>
</dbReference>
<dbReference type="GO" id="GO:0032259">
    <property type="term" value="P:methylation"/>
    <property type="evidence" value="ECO:0007669"/>
    <property type="project" value="UniProtKB-KW"/>
</dbReference>
<dbReference type="CDD" id="cd02440">
    <property type="entry name" value="AdoMet_MTases"/>
    <property type="match status" value="1"/>
</dbReference>
<dbReference type="FunFam" id="3.40.50.150:FF:000086">
    <property type="entry name" value="Demethylmenaquinone methyltransferase"/>
    <property type="match status" value="1"/>
</dbReference>
<dbReference type="Gene3D" id="3.40.50.150">
    <property type="entry name" value="Vaccinia Virus protein VP39"/>
    <property type="match status" value="1"/>
</dbReference>
<dbReference type="HAMAP" id="MF_01813">
    <property type="entry name" value="MenG_UbiE_methyltr"/>
    <property type="match status" value="1"/>
</dbReference>
<dbReference type="InterPro" id="IPR029063">
    <property type="entry name" value="SAM-dependent_MTases_sf"/>
</dbReference>
<dbReference type="InterPro" id="IPR004033">
    <property type="entry name" value="UbiE/COQ5_MeTrFase"/>
</dbReference>
<dbReference type="InterPro" id="IPR023576">
    <property type="entry name" value="UbiE/COQ5_MeTrFase_CS"/>
</dbReference>
<dbReference type="NCBIfam" id="TIGR01934">
    <property type="entry name" value="MenG_MenH_UbiE"/>
    <property type="match status" value="1"/>
</dbReference>
<dbReference type="NCBIfam" id="NF001243">
    <property type="entry name" value="PRK00216.1-4"/>
    <property type="match status" value="1"/>
</dbReference>
<dbReference type="NCBIfam" id="NF001244">
    <property type="entry name" value="PRK00216.1-5"/>
    <property type="match status" value="1"/>
</dbReference>
<dbReference type="PANTHER" id="PTHR43591:SF24">
    <property type="entry name" value="2-METHOXY-6-POLYPRENYL-1,4-BENZOQUINOL METHYLASE, MITOCHONDRIAL"/>
    <property type="match status" value="1"/>
</dbReference>
<dbReference type="PANTHER" id="PTHR43591">
    <property type="entry name" value="METHYLTRANSFERASE"/>
    <property type="match status" value="1"/>
</dbReference>
<dbReference type="Pfam" id="PF01209">
    <property type="entry name" value="Ubie_methyltran"/>
    <property type="match status" value="1"/>
</dbReference>
<dbReference type="SUPFAM" id="SSF53335">
    <property type="entry name" value="S-adenosyl-L-methionine-dependent methyltransferases"/>
    <property type="match status" value="1"/>
</dbReference>
<dbReference type="PROSITE" id="PS51608">
    <property type="entry name" value="SAM_MT_UBIE"/>
    <property type="match status" value="1"/>
</dbReference>
<dbReference type="PROSITE" id="PS01183">
    <property type="entry name" value="UBIE_1"/>
    <property type="match status" value="1"/>
</dbReference>
<dbReference type="PROSITE" id="PS01184">
    <property type="entry name" value="UBIE_2"/>
    <property type="match status" value="1"/>
</dbReference>
<name>MENG_LACLA</name>
<sequence>MCYNKSMTKVNEERVQEIFNSISSDYDKMNAIISFKQHDLWRAKTMKRMGDLTGLSILDLCCGTGDWTFDLSESVGPSGKVIGLDFSENMLEIAKAKLKEEAKKNIEFLQGNAMALPFEKGSFDVVTIGYGLRNTPDYLTVLKEIFRVLKPGGRVVCIETSHPTLPIYKQAFELYFKNVMPFLGKVFAKSLKEYQWLQKSAEDFPDAKTLEELFRKAGFVAVEYQKHGGGAIASHFATKSQKPKSNIRIGKK</sequence>
<proteinExistence type="inferred from homology"/>
<comment type="function">
    <text evidence="1">Methyltransferase required for the conversion of demethylmenaquinol (DMKH2) to menaquinol (MKH2).</text>
</comment>
<comment type="catalytic activity">
    <reaction evidence="1">
        <text>a 2-demethylmenaquinol + S-adenosyl-L-methionine = a menaquinol + S-adenosyl-L-homocysteine + H(+)</text>
        <dbReference type="Rhea" id="RHEA:42640"/>
        <dbReference type="Rhea" id="RHEA-COMP:9539"/>
        <dbReference type="Rhea" id="RHEA-COMP:9563"/>
        <dbReference type="ChEBI" id="CHEBI:15378"/>
        <dbReference type="ChEBI" id="CHEBI:18151"/>
        <dbReference type="ChEBI" id="CHEBI:55437"/>
        <dbReference type="ChEBI" id="CHEBI:57856"/>
        <dbReference type="ChEBI" id="CHEBI:59789"/>
        <dbReference type="EC" id="2.1.1.163"/>
    </reaction>
</comment>
<comment type="pathway">
    <text evidence="1">Quinol/quinone metabolism; menaquinone biosynthesis; menaquinol from 1,4-dihydroxy-2-naphthoate: step 2/2.</text>
</comment>
<comment type="similarity">
    <text evidence="1">Belongs to the class I-like SAM-binding methyltransferase superfamily. MenG/UbiE family.</text>
</comment>
<comment type="sequence caution" evidence="2">
    <conflict type="frameshift">
        <sequence resource="EMBL" id="AE005176"/>
    </conflict>
</comment>
<reference key="1">
    <citation type="journal article" date="1993" name="J. Bacteriol.">
        <title>Cloning of a chromosomal gene required for phage infection of Lactococcus lactis subsp. lactis C2.</title>
        <authorList>
            <person name="Geller B.L."/>
            <person name="Ivey R.G."/>
            <person name="Trempy J.E."/>
            <person name="Hettinger-Smith B."/>
        </authorList>
    </citation>
    <scope>NUCLEOTIDE SEQUENCE [GENOMIC DNA]</scope>
    <source>
        <strain>C2</strain>
    </source>
</reference>
<reference key="2">
    <citation type="journal article" date="2001" name="Genome Res.">
        <title>The complete genome sequence of the lactic acid bacterium Lactococcus lactis ssp. lactis IL1403.</title>
        <authorList>
            <person name="Bolotin A."/>
            <person name="Wincker P."/>
            <person name="Mauger S."/>
            <person name="Jaillon O."/>
            <person name="Malarme K."/>
            <person name="Weissenbach J."/>
            <person name="Ehrlich S.D."/>
            <person name="Sorokin A."/>
        </authorList>
    </citation>
    <scope>NUCLEOTIDE SEQUENCE [LARGE SCALE GENOMIC DNA]</scope>
    <source>
        <strain>IL1403</strain>
    </source>
</reference>
<protein>
    <recommendedName>
        <fullName evidence="1">Demethylmenaquinone methyltransferase</fullName>
        <ecNumber evidence="1">2.1.1.163</ecNumber>
    </recommendedName>
</protein>
<evidence type="ECO:0000255" key="1">
    <source>
        <dbReference type="HAMAP-Rule" id="MF_01813"/>
    </source>
</evidence>
<evidence type="ECO:0000305" key="2"/>